<comment type="similarity">
    <text evidence="1">Belongs to the UPF0145 family.</text>
</comment>
<protein>
    <recommendedName>
        <fullName evidence="1">UPF0145 protein DSY2697</fullName>
    </recommendedName>
</protein>
<accession>Q24U06</accession>
<proteinExistence type="inferred from homology"/>
<dbReference type="EMBL" id="AP008230">
    <property type="protein sequence ID" value="BAE84486.1"/>
    <property type="molecule type" value="Genomic_DNA"/>
</dbReference>
<dbReference type="RefSeq" id="WP_005811819.1">
    <property type="nucleotide sequence ID" value="NC_007907.1"/>
</dbReference>
<dbReference type="SMR" id="Q24U06"/>
<dbReference type="STRING" id="138119.DSY2697"/>
<dbReference type="KEGG" id="dsy:DSY2697"/>
<dbReference type="eggNOG" id="COG0393">
    <property type="taxonomic scope" value="Bacteria"/>
</dbReference>
<dbReference type="HOGENOM" id="CLU_117144_3_2_9"/>
<dbReference type="Proteomes" id="UP000001946">
    <property type="component" value="Chromosome"/>
</dbReference>
<dbReference type="Gene3D" id="3.30.110.70">
    <property type="entry name" value="Hypothetical protein apc22750. Chain B"/>
    <property type="match status" value="1"/>
</dbReference>
<dbReference type="HAMAP" id="MF_00338">
    <property type="entry name" value="UPF0145"/>
    <property type="match status" value="1"/>
</dbReference>
<dbReference type="InterPro" id="IPR035439">
    <property type="entry name" value="UPF0145_dom_sf"/>
</dbReference>
<dbReference type="InterPro" id="IPR002765">
    <property type="entry name" value="UPF0145_YbjQ-like"/>
</dbReference>
<dbReference type="NCBIfam" id="NF002776">
    <property type="entry name" value="PRK02877.1"/>
    <property type="match status" value="1"/>
</dbReference>
<dbReference type="PANTHER" id="PTHR34068">
    <property type="entry name" value="UPF0145 PROTEIN YBJQ"/>
    <property type="match status" value="1"/>
</dbReference>
<dbReference type="PANTHER" id="PTHR34068:SF1">
    <property type="entry name" value="UPF0145 PROTEIN YBJQ"/>
    <property type="match status" value="1"/>
</dbReference>
<dbReference type="Pfam" id="PF01906">
    <property type="entry name" value="YbjQ_1"/>
    <property type="match status" value="1"/>
</dbReference>
<dbReference type="SUPFAM" id="SSF117782">
    <property type="entry name" value="YbjQ-like"/>
    <property type="match status" value="1"/>
</dbReference>
<feature type="chain" id="PRO_1000012992" description="UPF0145 protein DSY2697">
    <location>
        <begin position="1"/>
        <end position="106"/>
    </location>
</feature>
<sequence>MIVTTTPNIDGRKIQNYYGIVTGEAIMGANVVRDIFAGITDIIGGRSGAYEEKLQDARQIALKEMEQNAARMGANAVVGVDIDYEVVGQSGSMLMVSASGTAVTVV</sequence>
<reference key="1">
    <citation type="journal article" date="2006" name="J. Bacteriol.">
        <title>Complete genome sequence of the dehalorespiring bacterium Desulfitobacterium hafniense Y51 and comparison with Dehalococcoides ethenogenes 195.</title>
        <authorList>
            <person name="Nonaka H."/>
            <person name="Keresztes G."/>
            <person name="Shinoda Y."/>
            <person name="Ikenaga Y."/>
            <person name="Abe M."/>
            <person name="Naito K."/>
            <person name="Inatomi K."/>
            <person name="Furukawa K."/>
            <person name="Inui M."/>
            <person name="Yukawa H."/>
        </authorList>
    </citation>
    <scope>NUCLEOTIDE SEQUENCE [LARGE SCALE GENOMIC DNA]</scope>
    <source>
        <strain>Y51</strain>
    </source>
</reference>
<name>Y2697_DESHY</name>
<evidence type="ECO:0000255" key="1">
    <source>
        <dbReference type="HAMAP-Rule" id="MF_00338"/>
    </source>
</evidence>
<organism>
    <name type="scientific">Desulfitobacterium hafniense (strain Y51)</name>
    <dbReference type="NCBI Taxonomy" id="138119"/>
    <lineage>
        <taxon>Bacteria</taxon>
        <taxon>Bacillati</taxon>
        <taxon>Bacillota</taxon>
        <taxon>Clostridia</taxon>
        <taxon>Eubacteriales</taxon>
        <taxon>Desulfitobacteriaceae</taxon>
        <taxon>Desulfitobacterium</taxon>
    </lineage>
</organism>
<gene>
    <name type="ordered locus">DSY2697</name>
</gene>
<keyword id="KW-1185">Reference proteome</keyword>